<feature type="chain" id="PRO_1000091768" description="Elongation factor G">
    <location>
        <begin position="1"/>
        <end position="693"/>
    </location>
</feature>
<feature type="domain" description="tr-type G">
    <location>
        <begin position="8"/>
        <end position="282"/>
    </location>
</feature>
<feature type="binding site" evidence="1">
    <location>
        <begin position="17"/>
        <end position="24"/>
    </location>
    <ligand>
        <name>GTP</name>
        <dbReference type="ChEBI" id="CHEBI:37565"/>
    </ligand>
</feature>
<feature type="binding site" evidence="1">
    <location>
        <begin position="81"/>
        <end position="85"/>
    </location>
    <ligand>
        <name>GTP</name>
        <dbReference type="ChEBI" id="CHEBI:37565"/>
    </ligand>
</feature>
<feature type="binding site" evidence="1">
    <location>
        <begin position="135"/>
        <end position="138"/>
    </location>
    <ligand>
        <name>GTP</name>
        <dbReference type="ChEBI" id="CHEBI:37565"/>
    </ligand>
</feature>
<evidence type="ECO:0000255" key="1">
    <source>
        <dbReference type="HAMAP-Rule" id="MF_00054"/>
    </source>
</evidence>
<proteinExistence type="inferred from homology"/>
<keyword id="KW-0963">Cytoplasm</keyword>
<keyword id="KW-0251">Elongation factor</keyword>
<keyword id="KW-0342">GTP-binding</keyword>
<keyword id="KW-0547">Nucleotide-binding</keyword>
<keyword id="KW-0648">Protein biosynthesis</keyword>
<protein>
    <recommendedName>
        <fullName evidence="1">Elongation factor G</fullName>
        <shortName evidence="1">EF-G</shortName>
    </recommendedName>
</protein>
<reference key="1">
    <citation type="journal article" date="2010" name="Genome Biol.">
        <title>Structure and dynamics of the pan-genome of Streptococcus pneumoniae and closely related species.</title>
        <authorList>
            <person name="Donati C."/>
            <person name="Hiller N.L."/>
            <person name="Tettelin H."/>
            <person name="Muzzi A."/>
            <person name="Croucher N.J."/>
            <person name="Angiuoli S.V."/>
            <person name="Oggioni M."/>
            <person name="Dunning Hotopp J.C."/>
            <person name="Hu F.Z."/>
            <person name="Riley D.R."/>
            <person name="Covacci A."/>
            <person name="Mitchell T.J."/>
            <person name="Bentley S.D."/>
            <person name="Kilian M."/>
            <person name="Ehrlich G.D."/>
            <person name="Rappuoli R."/>
            <person name="Moxon E.R."/>
            <person name="Masignani V."/>
        </authorList>
    </citation>
    <scope>NUCLEOTIDE SEQUENCE [LARGE SCALE GENOMIC DNA]</scope>
    <source>
        <strain>Hungary19A-6</strain>
    </source>
</reference>
<sequence>MAREFSLEKTRNIGIMAHVDAGKTTTTERILYYTGKIHKIGETHEGASQMDWMEQEQERGITITSAATTAQWNNHRVNIIDTPGHVDFTIEVQRSLRVLDGAVTVLDSQSGVEPQTETVWRQATEYGVPRIVFANKMDKIGADFLYSVSTLHDRLQANAHPIQLPIGSEDDFRGIIDLIKMKAEIYTNDLGTDILEEDIPAEYLDQAQEYREKLVEAVAETDEDLMMKYLEGEEITNEELKAGIRKATINVEFFPVLCGSAFKNKGVQLMLDAVIDYLPSPLDIPAIKGINPDTDEEETRPASDEEPFAALAFKIMTDPFVGRLTFFRVYSGVLQSGSYVLNTSKGKRERIGRILQMHANSRQEIDTVYSGDIAAAVGLKDTTTGDSLTDEKAKIILESINVPEPVIQLMVEPKSKADQDKMGIALQKLAEEDPTFRVETNVETGETVISGMGELHLDVLVDRMRREFKVEANVGAPQVSYRETFRASTQARGFFKRQSGGKGQFGDVWIEFTPNEEGKGFEFENAIVGGVVPREFIPAVEKGLVESMANGVLAGYPMVDVKAKLYDGSYHDVDSSETAFKIAASLALKEAAKSAQPAILEPMMLVTITVPEENLGDVMGHVTARRGRVDGMEAHGNSQIVRAYVPLAEMFGYATVLRSASQGRGTFMMVFDHYEDVPKSVQEEIIKKNKGED</sequence>
<gene>
    <name evidence="1" type="primary">fusA</name>
    <name type="ordered locus">SPH_0389</name>
</gene>
<organism>
    <name type="scientific">Streptococcus pneumoniae (strain Hungary19A-6)</name>
    <dbReference type="NCBI Taxonomy" id="487214"/>
    <lineage>
        <taxon>Bacteria</taxon>
        <taxon>Bacillati</taxon>
        <taxon>Bacillota</taxon>
        <taxon>Bacilli</taxon>
        <taxon>Lactobacillales</taxon>
        <taxon>Streptococcaceae</taxon>
        <taxon>Streptococcus</taxon>
    </lineage>
</organism>
<accession>B1I8Z9</accession>
<name>EFG_STRPI</name>
<dbReference type="EMBL" id="CP000936">
    <property type="protein sequence ID" value="ACA35557.1"/>
    <property type="molecule type" value="Genomic_DNA"/>
</dbReference>
<dbReference type="RefSeq" id="WP_000090353.1">
    <property type="nucleotide sequence ID" value="NC_010380.1"/>
</dbReference>
<dbReference type="SMR" id="B1I8Z9"/>
<dbReference type="KEGG" id="spv:SPH_0389"/>
<dbReference type="HOGENOM" id="CLU_002794_4_1_9"/>
<dbReference type="Proteomes" id="UP000002163">
    <property type="component" value="Chromosome"/>
</dbReference>
<dbReference type="GO" id="GO:0005737">
    <property type="term" value="C:cytoplasm"/>
    <property type="evidence" value="ECO:0007669"/>
    <property type="project" value="UniProtKB-SubCell"/>
</dbReference>
<dbReference type="GO" id="GO:0005525">
    <property type="term" value="F:GTP binding"/>
    <property type="evidence" value="ECO:0007669"/>
    <property type="project" value="UniProtKB-UniRule"/>
</dbReference>
<dbReference type="GO" id="GO:0003924">
    <property type="term" value="F:GTPase activity"/>
    <property type="evidence" value="ECO:0007669"/>
    <property type="project" value="InterPro"/>
</dbReference>
<dbReference type="GO" id="GO:0003746">
    <property type="term" value="F:translation elongation factor activity"/>
    <property type="evidence" value="ECO:0007669"/>
    <property type="project" value="UniProtKB-UniRule"/>
</dbReference>
<dbReference type="GO" id="GO:0032790">
    <property type="term" value="P:ribosome disassembly"/>
    <property type="evidence" value="ECO:0007669"/>
    <property type="project" value="TreeGrafter"/>
</dbReference>
<dbReference type="CDD" id="cd01886">
    <property type="entry name" value="EF-G"/>
    <property type="match status" value="1"/>
</dbReference>
<dbReference type="CDD" id="cd16262">
    <property type="entry name" value="EFG_III"/>
    <property type="match status" value="1"/>
</dbReference>
<dbReference type="CDD" id="cd01434">
    <property type="entry name" value="EFG_mtEFG1_IV"/>
    <property type="match status" value="1"/>
</dbReference>
<dbReference type="CDD" id="cd03713">
    <property type="entry name" value="EFG_mtEFG_C"/>
    <property type="match status" value="1"/>
</dbReference>
<dbReference type="CDD" id="cd04088">
    <property type="entry name" value="EFG_mtEFG_II"/>
    <property type="match status" value="1"/>
</dbReference>
<dbReference type="FunFam" id="2.40.30.10:FF:000006">
    <property type="entry name" value="Elongation factor G"/>
    <property type="match status" value="1"/>
</dbReference>
<dbReference type="FunFam" id="3.30.230.10:FF:000003">
    <property type="entry name" value="Elongation factor G"/>
    <property type="match status" value="1"/>
</dbReference>
<dbReference type="FunFam" id="3.30.70.240:FF:000001">
    <property type="entry name" value="Elongation factor G"/>
    <property type="match status" value="1"/>
</dbReference>
<dbReference type="FunFam" id="3.30.70.870:FF:000001">
    <property type="entry name" value="Elongation factor G"/>
    <property type="match status" value="1"/>
</dbReference>
<dbReference type="FunFam" id="3.40.50.300:FF:000029">
    <property type="entry name" value="Elongation factor G"/>
    <property type="match status" value="1"/>
</dbReference>
<dbReference type="Gene3D" id="3.30.230.10">
    <property type="match status" value="1"/>
</dbReference>
<dbReference type="Gene3D" id="3.30.70.240">
    <property type="match status" value="1"/>
</dbReference>
<dbReference type="Gene3D" id="3.30.70.870">
    <property type="entry name" value="Elongation Factor G (Translational Gtpase), domain 3"/>
    <property type="match status" value="1"/>
</dbReference>
<dbReference type="Gene3D" id="3.40.50.300">
    <property type="entry name" value="P-loop containing nucleotide triphosphate hydrolases"/>
    <property type="match status" value="1"/>
</dbReference>
<dbReference type="Gene3D" id="2.40.30.10">
    <property type="entry name" value="Translation factors"/>
    <property type="match status" value="1"/>
</dbReference>
<dbReference type="HAMAP" id="MF_00054_B">
    <property type="entry name" value="EF_G_EF_2_B"/>
    <property type="match status" value="1"/>
</dbReference>
<dbReference type="InterPro" id="IPR053905">
    <property type="entry name" value="EF-G-like_DII"/>
</dbReference>
<dbReference type="InterPro" id="IPR041095">
    <property type="entry name" value="EFG_II"/>
</dbReference>
<dbReference type="InterPro" id="IPR009022">
    <property type="entry name" value="EFG_III"/>
</dbReference>
<dbReference type="InterPro" id="IPR035647">
    <property type="entry name" value="EFG_III/V"/>
</dbReference>
<dbReference type="InterPro" id="IPR047872">
    <property type="entry name" value="EFG_IV"/>
</dbReference>
<dbReference type="InterPro" id="IPR035649">
    <property type="entry name" value="EFG_V"/>
</dbReference>
<dbReference type="InterPro" id="IPR000640">
    <property type="entry name" value="EFG_V-like"/>
</dbReference>
<dbReference type="InterPro" id="IPR031157">
    <property type="entry name" value="G_TR_CS"/>
</dbReference>
<dbReference type="InterPro" id="IPR027417">
    <property type="entry name" value="P-loop_NTPase"/>
</dbReference>
<dbReference type="InterPro" id="IPR020568">
    <property type="entry name" value="Ribosomal_Su5_D2-typ_SF"/>
</dbReference>
<dbReference type="InterPro" id="IPR014721">
    <property type="entry name" value="Ribsml_uS5_D2-typ_fold_subgr"/>
</dbReference>
<dbReference type="InterPro" id="IPR005225">
    <property type="entry name" value="Small_GTP-bd"/>
</dbReference>
<dbReference type="InterPro" id="IPR000795">
    <property type="entry name" value="T_Tr_GTP-bd_dom"/>
</dbReference>
<dbReference type="InterPro" id="IPR009000">
    <property type="entry name" value="Transl_B-barrel_sf"/>
</dbReference>
<dbReference type="InterPro" id="IPR004540">
    <property type="entry name" value="Transl_elong_EFG/EF2"/>
</dbReference>
<dbReference type="InterPro" id="IPR005517">
    <property type="entry name" value="Transl_elong_EFG/EF2_IV"/>
</dbReference>
<dbReference type="NCBIfam" id="TIGR00484">
    <property type="entry name" value="EF-G"/>
    <property type="match status" value="1"/>
</dbReference>
<dbReference type="NCBIfam" id="NF009379">
    <property type="entry name" value="PRK12740.1-3"/>
    <property type="match status" value="1"/>
</dbReference>
<dbReference type="NCBIfam" id="NF009381">
    <property type="entry name" value="PRK12740.1-5"/>
    <property type="match status" value="1"/>
</dbReference>
<dbReference type="NCBIfam" id="TIGR00231">
    <property type="entry name" value="small_GTP"/>
    <property type="match status" value="1"/>
</dbReference>
<dbReference type="PANTHER" id="PTHR43261:SF1">
    <property type="entry name" value="RIBOSOME-RELEASING FACTOR 2, MITOCHONDRIAL"/>
    <property type="match status" value="1"/>
</dbReference>
<dbReference type="PANTHER" id="PTHR43261">
    <property type="entry name" value="TRANSLATION ELONGATION FACTOR G-RELATED"/>
    <property type="match status" value="1"/>
</dbReference>
<dbReference type="Pfam" id="PF22042">
    <property type="entry name" value="EF-G_D2"/>
    <property type="match status" value="1"/>
</dbReference>
<dbReference type="Pfam" id="PF00679">
    <property type="entry name" value="EFG_C"/>
    <property type="match status" value="1"/>
</dbReference>
<dbReference type="Pfam" id="PF14492">
    <property type="entry name" value="EFG_III"/>
    <property type="match status" value="1"/>
</dbReference>
<dbReference type="Pfam" id="PF03764">
    <property type="entry name" value="EFG_IV"/>
    <property type="match status" value="1"/>
</dbReference>
<dbReference type="Pfam" id="PF00009">
    <property type="entry name" value="GTP_EFTU"/>
    <property type="match status" value="1"/>
</dbReference>
<dbReference type="PRINTS" id="PR00315">
    <property type="entry name" value="ELONGATNFCT"/>
</dbReference>
<dbReference type="SMART" id="SM00838">
    <property type="entry name" value="EFG_C"/>
    <property type="match status" value="1"/>
</dbReference>
<dbReference type="SMART" id="SM00889">
    <property type="entry name" value="EFG_IV"/>
    <property type="match status" value="1"/>
</dbReference>
<dbReference type="SUPFAM" id="SSF54980">
    <property type="entry name" value="EF-G C-terminal domain-like"/>
    <property type="match status" value="2"/>
</dbReference>
<dbReference type="SUPFAM" id="SSF52540">
    <property type="entry name" value="P-loop containing nucleoside triphosphate hydrolases"/>
    <property type="match status" value="1"/>
</dbReference>
<dbReference type="SUPFAM" id="SSF54211">
    <property type="entry name" value="Ribosomal protein S5 domain 2-like"/>
    <property type="match status" value="1"/>
</dbReference>
<dbReference type="SUPFAM" id="SSF50447">
    <property type="entry name" value="Translation proteins"/>
    <property type="match status" value="1"/>
</dbReference>
<dbReference type="PROSITE" id="PS00301">
    <property type="entry name" value="G_TR_1"/>
    <property type="match status" value="1"/>
</dbReference>
<dbReference type="PROSITE" id="PS51722">
    <property type="entry name" value="G_TR_2"/>
    <property type="match status" value="1"/>
</dbReference>
<comment type="function">
    <text evidence="1">Catalyzes the GTP-dependent ribosomal translocation step during translation elongation. During this step, the ribosome changes from the pre-translocational (PRE) to the post-translocational (POST) state as the newly formed A-site-bound peptidyl-tRNA and P-site-bound deacylated tRNA move to the P and E sites, respectively. Catalyzes the coordinated movement of the two tRNA molecules, the mRNA and conformational changes in the ribosome.</text>
</comment>
<comment type="subcellular location">
    <subcellularLocation>
        <location evidence="1">Cytoplasm</location>
    </subcellularLocation>
</comment>
<comment type="similarity">
    <text evidence="1">Belongs to the TRAFAC class translation factor GTPase superfamily. Classic translation factor GTPase family. EF-G/EF-2 subfamily.</text>
</comment>